<keyword id="KW-0067">ATP-binding</keyword>
<keyword id="KW-0319">Glycerol metabolism</keyword>
<keyword id="KW-0418">Kinase</keyword>
<keyword id="KW-0547">Nucleotide-binding</keyword>
<keyword id="KW-0597">Phosphoprotein</keyword>
<keyword id="KW-1185">Reference proteome</keyword>
<keyword id="KW-0808">Transferase</keyword>
<name>GLPK_STRP1</name>
<evidence type="ECO:0000255" key="1">
    <source>
        <dbReference type="HAMAP-Rule" id="MF_00186"/>
    </source>
</evidence>
<accession>Q99YI7</accession>
<accession>Q48XC6</accession>
<sequence>MSQEKYIMAIDQGTTSSRAIIFNQKGEKVSSSQKEFPQIFPHAGWVEHNANQIWNSVQSVIAGAFIESSIKPSQIEAIGITNQRETTVVWDKKTGVPIYNAIVWQSRQTAPIAEQLKQDGHTKMIHEKTGLVIDAYFSATKIRWILDHVPGAQERAEKGELLFGTIDTWLVWKLTDGAVHVTDYSNAARTMLYNIKDLTWDDEILELLNIPKDMLPEVKSNSEIYGKTAAFHFYGGEVPISGMAGDQQAALFGQLAFEPGMVKNTYGTGSFIIMNTGDEMQLSSNNLLTTIGYGINGKVHYALEGSIFIAGSAIQWLRDGLKMIETSPESEQFALASTSDDEVYVVPAFTGLGAPYWDSNARGSVFGLTRGTSKEDFVKATLQSIAYQVRDVIDTMQVDSGIDIQQLRVDGGAAMNNMLMQFQADILGIDIARAKNLETTALGAAFLAGLAVGYWEDMDALKELNATGQLFKASMNESRKEKLYKGWKRAVKATQVFTQEEDADDDAK</sequence>
<dbReference type="EC" id="2.7.1.30" evidence="1"/>
<dbReference type="EMBL" id="AE004092">
    <property type="protein sequence ID" value="AAK34440.1"/>
    <property type="molecule type" value="Genomic_DNA"/>
</dbReference>
<dbReference type="EMBL" id="CP000017">
    <property type="protein sequence ID" value="AAZ51999.1"/>
    <property type="molecule type" value="Genomic_DNA"/>
</dbReference>
<dbReference type="RefSeq" id="NP_269719.1">
    <property type="nucleotide sequence ID" value="NC_002737.2"/>
</dbReference>
<dbReference type="SMR" id="Q99YI7"/>
<dbReference type="PaxDb" id="1314-HKU360_01433"/>
<dbReference type="KEGG" id="spy:SPy_1684"/>
<dbReference type="KEGG" id="spz:M5005_Spy1381"/>
<dbReference type="PATRIC" id="fig|160490.10.peg.1465"/>
<dbReference type="HOGENOM" id="CLU_009281_2_3_9"/>
<dbReference type="OMA" id="FMLMNIG"/>
<dbReference type="UniPathway" id="UPA00618">
    <property type="reaction ID" value="UER00672"/>
</dbReference>
<dbReference type="Proteomes" id="UP000000750">
    <property type="component" value="Chromosome"/>
</dbReference>
<dbReference type="GO" id="GO:0005829">
    <property type="term" value="C:cytosol"/>
    <property type="evidence" value="ECO:0007669"/>
    <property type="project" value="TreeGrafter"/>
</dbReference>
<dbReference type="GO" id="GO:0005524">
    <property type="term" value="F:ATP binding"/>
    <property type="evidence" value="ECO:0007669"/>
    <property type="project" value="UniProtKB-UniRule"/>
</dbReference>
<dbReference type="GO" id="GO:0004370">
    <property type="term" value="F:glycerol kinase activity"/>
    <property type="evidence" value="ECO:0000250"/>
    <property type="project" value="UniProtKB"/>
</dbReference>
<dbReference type="GO" id="GO:0019563">
    <property type="term" value="P:glycerol catabolic process"/>
    <property type="evidence" value="ECO:0007669"/>
    <property type="project" value="UniProtKB-UniRule"/>
</dbReference>
<dbReference type="GO" id="GO:0006071">
    <property type="term" value="P:glycerol metabolic process"/>
    <property type="evidence" value="ECO:0000250"/>
    <property type="project" value="UniProtKB"/>
</dbReference>
<dbReference type="GO" id="GO:0006072">
    <property type="term" value="P:glycerol-3-phosphate metabolic process"/>
    <property type="evidence" value="ECO:0007669"/>
    <property type="project" value="InterPro"/>
</dbReference>
<dbReference type="CDD" id="cd07786">
    <property type="entry name" value="FGGY_EcGK_like"/>
    <property type="match status" value="1"/>
</dbReference>
<dbReference type="FunFam" id="3.30.420.40:FF:000007">
    <property type="entry name" value="Glycerol kinase"/>
    <property type="match status" value="1"/>
</dbReference>
<dbReference type="FunFam" id="3.30.420.40:FF:000008">
    <property type="entry name" value="Glycerol kinase"/>
    <property type="match status" value="1"/>
</dbReference>
<dbReference type="Gene3D" id="3.30.420.40">
    <property type="match status" value="2"/>
</dbReference>
<dbReference type="HAMAP" id="MF_00186">
    <property type="entry name" value="Glycerol_kin"/>
    <property type="match status" value="1"/>
</dbReference>
<dbReference type="InterPro" id="IPR043129">
    <property type="entry name" value="ATPase_NBD"/>
</dbReference>
<dbReference type="InterPro" id="IPR000577">
    <property type="entry name" value="Carb_kinase_FGGY"/>
</dbReference>
<dbReference type="InterPro" id="IPR018483">
    <property type="entry name" value="Carb_kinase_FGGY_CS"/>
</dbReference>
<dbReference type="InterPro" id="IPR018485">
    <property type="entry name" value="FGGY_C"/>
</dbReference>
<dbReference type="InterPro" id="IPR018484">
    <property type="entry name" value="FGGY_N"/>
</dbReference>
<dbReference type="InterPro" id="IPR005999">
    <property type="entry name" value="Glycerol_kin"/>
</dbReference>
<dbReference type="NCBIfam" id="TIGR01311">
    <property type="entry name" value="glycerol_kin"/>
    <property type="match status" value="1"/>
</dbReference>
<dbReference type="NCBIfam" id="NF000756">
    <property type="entry name" value="PRK00047.1"/>
    <property type="match status" value="1"/>
</dbReference>
<dbReference type="PANTHER" id="PTHR10196:SF69">
    <property type="entry name" value="GLYCEROL KINASE"/>
    <property type="match status" value="1"/>
</dbReference>
<dbReference type="PANTHER" id="PTHR10196">
    <property type="entry name" value="SUGAR KINASE"/>
    <property type="match status" value="1"/>
</dbReference>
<dbReference type="Pfam" id="PF02782">
    <property type="entry name" value="FGGY_C"/>
    <property type="match status" value="1"/>
</dbReference>
<dbReference type="Pfam" id="PF00370">
    <property type="entry name" value="FGGY_N"/>
    <property type="match status" value="1"/>
</dbReference>
<dbReference type="PIRSF" id="PIRSF000538">
    <property type="entry name" value="GlpK"/>
    <property type="match status" value="1"/>
</dbReference>
<dbReference type="SUPFAM" id="SSF53067">
    <property type="entry name" value="Actin-like ATPase domain"/>
    <property type="match status" value="2"/>
</dbReference>
<dbReference type="PROSITE" id="PS00933">
    <property type="entry name" value="FGGY_KINASES_1"/>
    <property type="match status" value="1"/>
</dbReference>
<dbReference type="PROSITE" id="PS00445">
    <property type="entry name" value="FGGY_KINASES_2"/>
    <property type="match status" value="1"/>
</dbReference>
<gene>
    <name evidence="1" type="primary">glpK</name>
    <name type="ordered locus">SPy_1684</name>
    <name type="ordered locus">M5005_Spy1381</name>
</gene>
<comment type="function">
    <text evidence="1">Key enzyme in the regulation of glycerol uptake and metabolism. Catalyzes the phosphorylation of glycerol to yield sn-glycerol 3-phosphate.</text>
</comment>
<comment type="catalytic activity">
    <reaction evidence="1">
        <text>glycerol + ATP = sn-glycerol 3-phosphate + ADP + H(+)</text>
        <dbReference type="Rhea" id="RHEA:21644"/>
        <dbReference type="ChEBI" id="CHEBI:15378"/>
        <dbReference type="ChEBI" id="CHEBI:17754"/>
        <dbReference type="ChEBI" id="CHEBI:30616"/>
        <dbReference type="ChEBI" id="CHEBI:57597"/>
        <dbReference type="ChEBI" id="CHEBI:456216"/>
        <dbReference type="EC" id="2.7.1.30"/>
    </reaction>
</comment>
<comment type="activity regulation">
    <text evidence="1">Activated by phosphorylation and inhibited by fructose 1,6-bisphosphate (FBP).</text>
</comment>
<comment type="pathway">
    <text evidence="1">Polyol metabolism; glycerol degradation via glycerol kinase pathway; sn-glycerol 3-phosphate from glycerol: step 1/1.</text>
</comment>
<comment type="subunit">
    <text evidence="1">Homotetramer and homodimer (in equilibrium).</text>
</comment>
<comment type="PTM">
    <text evidence="1">The phosphoenolpyruvate-dependent sugar phosphotransferase system (PTS), including enzyme I, and histidine-containing protein (HPr) are required for the phosphorylation, which leads to the activation of the enzyme.</text>
</comment>
<comment type="similarity">
    <text evidence="1">Belongs to the FGGY kinase family.</text>
</comment>
<feature type="chain" id="PRO_0000059507" description="Glycerol kinase">
    <location>
        <begin position="1"/>
        <end position="508"/>
    </location>
</feature>
<feature type="binding site" evidence="1">
    <location>
        <position position="14"/>
    </location>
    <ligand>
        <name>ADP</name>
        <dbReference type="ChEBI" id="CHEBI:456216"/>
    </ligand>
</feature>
<feature type="binding site" evidence="1">
    <location>
        <position position="14"/>
    </location>
    <ligand>
        <name>ATP</name>
        <dbReference type="ChEBI" id="CHEBI:30616"/>
    </ligand>
</feature>
<feature type="binding site" evidence="1">
    <location>
        <position position="14"/>
    </location>
    <ligand>
        <name>sn-glycerol 3-phosphate</name>
        <dbReference type="ChEBI" id="CHEBI:57597"/>
    </ligand>
</feature>
<feature type="binding site" evidence="1">
    <location>
        <position position="15"/>
    </location>
    <ligand>
        <name>ATP</name>
        <dbReference type="ChEBI" id="CHEBI:30616"/>
    </ligand>
</feature>
<feature type="binding site" evidence="1">
    <location>
        <position position="16"/>
    </location>
    <ligand>
        <name>ATP</name>
        <dbReference type="ChEBI" id="CHEBI:30616"/>
    </ligand>
</feature>
<feature type="binding site" evidence="1">
    <location>
        <position position="18"/>
    </location>
    <ligand>
        <name>ADP</name>
        <dbReference type="ChEBI" id="CHEBI:456216"/>
    </ligand>
</feature>
<feature type="binding site" evidence="1">
    <location>
        <position position="84"/>
    </location>
    <ligand>
        <name>glycerol</name>
        <dbReference type="ChEBI" id="CHEBI:17754"/>
    </ligand>
</feature>
<feature type="binding site" evidence="1">
    <location>
        <position position="84"/>
    </location>
    <ligand>
        <name>sn-glycerol 3-phosphate</name>
        <dbReference type="ChEBI" id="CHEBI:57597"/>
    </ligand>
</feature>
<feature type="binding site" evidence="1">
    <location>
        <position position="85"/>
    </location>
    <ligand>
        <name>glycerol</name>
        <dbReference type="ChEBI" id="CHEBI:17754"/>
    </ligand>
</feature>
<feature type="binding site" evidence="1">
    <location>
        <position position="85"/>
    </location>
    <ligand>
        <name>sn-glycerol 3-phosphate</name>
        <dbReference type="ChEBI" id="CHEBI:57597"/>
    </ligand>
</feature>
<feature type="binding site" evidence="1">
    <location>
        <position position="136"/>
    </location>
    <ligand>
        <name>glycerol</name>
        <dbReference type="ChEBI" id="CHEBI:17754"/>
    </ligand>
</feature>
<feature type="binding site" evidence="1">
    <location>
        <position position="136"/>
    </location>
    <ligand>
        <name>sn-glycerol 3-phosphate</name>
        <dbReference type="ChEBI" id="CHEBI:57597"/>
    </ligand>
</feature>
<feature type="binding site" evidence="1">
    <location>
        <position position="246"/>
    </location>
    <ligand>
        <name>glycerol</name>
        <dbReference type="ChEBI" id="CHEBI:17754"/>
    </ligand>
</feature>
<feature type="binding site" evidence="1">
    <location>
        <position position="246"/>
    </location>
    <ligand>
        <name>sn-glycerol 3-phosphate</name>
        <dbReference type="ChEBI" id="CHEBI:57597"/>
    </ligand>
</feature>
<feature type="binding site" evidence="1">
    <location>
        <position position="247"/>
    </location>
    <ligand>
        <name>glycerol</name>
        <dbReference type="ChEBI" id="CHEBI:17754"/>
    </ligand>
</feature>
<feature type="binding site" evidence="1">
    <location>
        <position position="268"/>
    </location>
    <ligand>
        <name>ADP</name>
        <dbReference type="ChEBI" id="CHEBI:456216"/>
    </ligand>
</feature>
<feature type="binding site" evidence="1">
    <location>
        <position position="268"/>
    </location>
    <ligand>
        <name>ATP</name>
        <dbReference type="ChEBI" id="CHEBI:30616"/>
    </ligand>
</feature>
<feature type="binding site" evidence="1">
    <location>
        <position position="311"/>
    </location>
    <ligand>
        <name>ADP</name>
        <dbReference type="ChEBI" id="CHEBI:456216"/>
    </ligand>
</feature>
<feature type="binding site" evidence="1">
    <location>
        <position position="311"/>
    </location>
    <ligand>
        <name>ATP</name>
        <dbReference type="ChEBI" id="CHEBI:30616"/>
    </ligand>
</feature>
<feature type="binding site" evidence="1">
    <location>
        <position position="315"/>
    </location>
    <ligand>
        <name>ATP</name>
        <dbReference type="ChEBI" id="CHEBI:30616"/>
    </ligand>
</feature>
<feature type="binding site" evidence="1">
    <location>
        <position position="412"/>
    </location>
    <ligand>
        <name>ADP</name>
        <dbReference type="ChEBI" id="CHEBI:456216"/>
    </ligand>
</feature>
<feature type="binding site" evidence="1">
    <location>
        <position position="412"/>
    </location>
    <ligand>
        <name>ATP</name>
        <dbReference type="ChEBI" id="CHEBI:30616"/>
    </ligand>
</feature>
<feature type="binding site" evidence="1">
    <location>
        <position position="416"/>
    </location>
    <ligand>
        <name>ADP</name>
        <dbReference type="ChEBI" id="CHEBI:456216"/>
    </ligand>
</feature>
<feature type="modified residue" description="Phosphohistidine; by HPr" evidence="1">
    <location>
        <position position="232"/>
    </location>
</feature>
<organism>
    <name type="scientific">Streptococcus pyogenes serotype M1</name>
    <dbReference type="NCBI Taxonomy" id="301447"/>
    <lineage>
        <taxon>Bacteria</taxon>
        <taxon>Bacillati</taxon>
        <taxon>Bacillota</taxon>
        <taxon>Bacilli</taxon>
        <taxon>Lactobacillales</taxon>
        <taxon>Streptococcaceae</taxon>
        <taxon>Streptococcus</taxon>
    </lineage>
</organism>
<protein>
    <recommendedName>
        <fullName evidence="1">Glycerol kinase</fullName>
        <ecNumber evidence="1">2.7.1.30</ecNumber>
    </recommendedName>
    <alternativeName>
        <fullName evidence="1">ATP:glycerol 3-phosphotransferase</fullName>
    </alternativeName>
    <alternativeName>
        <fullName evidence="1">Glycerokinase</fullName>
        <shortName evidence="1">GK</shortName>
    </alternativeName>
</protein>
<proteinExistence type="inferred from homology"/>
<reference key="1">
    <citation type="journal article" date="2001" name="Proc. Natl. Acad. Sci. U.S.A.">
        <title>Complete genome sequence of an M1 strain of Streptococcus pyogenes.</title>
        <authorList>
            <person name="Ferretti J.J."/>
            <person name="McShan W.M."/>
            <person name="Ajdic D.J."/>
            <person name="Savic D.J."/>
            <person name="Savic G."/>
            <person name="Lyon K."/>
            <person name="Primeaux C."/>
            <person name="Sezate S."/>
            <person name="Suvorov A.N."/>
            <person name="Kenton S."/>
            <person name="Lai H.S."/>
            <person name="Lin S.P."/>
            <person name="Qian Y."/>
            <person name="Jia H.G."/>
            <person name="Najar F.Z."/>
            <person name="Ren Q."/>
            <person name="Zhu H."/>
            <person name="Song L."/>
            <person name="White J."/>
            <person name="Yuan X."/>
            <person name="Clifton S.W."/>
            <person name="Roe B.A."/>
            <person name="McLaughlin R.E."/>
        </authorList>
    </citation>
    <scope>NUCLEOTIDE SEQUENCE [LARGE SCALE GENOMIC DNA]</scope>
    <source>
        <strain>ATCC 700294 / SF370 / Serotype M1</strain>
    </source>
</reference>
<reference key="2">
    <citation type="journal article" date="2005" name="J. Infect. Dis.">
        <title>Evolutionary origin and emergence of a highly successful clone of serotype M1 group A Streptococcus involved multiple horizontal gene transfer events.</title>
        <authorList>
            <person name="Sumby P."/>
            <person name="Porcella S.F."/>
            <person name="Madrigal A.G."/>
            <person name="Barbian K.D."/>
            <person name="Virtaneva K."/>
            <person name="Ricklefs S.M."/>
            <person name="Sturdevant D.E."/>
            <person name="Graham M.R."/>
            <person name="Vuopio-Varkila J."/>
            <person name="Hoe N.P."/>
            <person name="Musser J.M."/>
        </authorList>
    </citation>
    <scope>NUCLEOTIDE SEQUENCE [LARGE SCALE GENOMIC DNA]</scope>
    <source>
        <strain>ATCC BAA-947 / MGAS5005 / Serotype M1</strain>
    </source>
</reference>